<geneLocation type="cyanelle"/>
<feature type="chain" id="PRO_0000216588" description="Photosystem II reaction center protein J">
    <location>
        <begin position="1"/>
        <end position="40"/>
    </location>
</feature>
<feature type="transmembrane region" description="Helical" evidence="1">
    <location>
        <begin position="8"/>
        <end position="28"/>
    </location>
</feature>
<accession>P19155</accession>
<organism>
    <name type="scientific">Cyanophora paradoxa</name>
    <dbReference type="NCBI Taxonomy" id="2762"/>
    <lineage>
        <taxon>Eukaryota</taxon>
        <taxon>Glaucocystophyceae</taxon>
        <taxon>Cyanophoraceae</taxon>
        <taxon>Cyanophora</taxon>
    </lineage>
</organism>
<reference key="1">
    <citation type="journal article" date="1988" name="Photosyn. Res.">
        <title>Nucleotide sequence of the genes encoding cytochrome b-559 from the cyanelle genome of Cyanophora paradoxa.</title>
        <authorList>
            <person name="Cantrell A."/>
            <person name="Bryant D.A."/>
        </authorList>
    </citation>
    <scope>NUCLEOTIDE SEQUENCE [GENOMIC DNA]</scope>
    <source>
        <strain>UTEX LB 555 / Pringsheim</strain>
    </source>
</reference>
<reference key="2">
    <citation type="journal article" date="1995" name="Plant Mol. Biol. Rep.">
        <title>Nucleotide sequence of the cyanelle DNA from Cyanophora paradoxa.</title>
        <authorList>
            <person name="Stirewalt V.L."/>
            <person name="Michalowski C.B."/>
            <person name="Loeffelhardt W."/>
            <person name="Bohnert H.J."/>
            <person name="Bryant D.A."/>
        </authorList>
    </citation>
    <scope>NUCLEOTIDE SEQUENCE [LARGE SCALE GENOMIC DNA]</scope>
    <source>
        <strain>UTEX LB 555 / Pringsheim</strain>
    </source>
</reference>
<reference key="3">
    <citation type="book" date="1997" name="Eukaryotism and symbiosis">
        <title>The complete sequence of the cyanelle genome of Cyanophora paradoxa: the genetic complexity of a primitive plastid.</title>
        <editorList>
            <person name="Schenk H.E.A."/>
            <person name="Herrmann R."/>
            <person name="Jeon K.W."/>
            <person name="Mueller N.E."/>
            <person name="Schwemmler W."/>
        </editorList>
        <authorList>
            <person name="Loeffelhardt W."/>
            <person name="Stirewalt V.L."/>
            <person name="Michalowski C.B."/>
            <person name="Annarella M."/>
            <person name="Farley J.Y."/>
            <person name="Schluchter W.M."/>
            <person name="Chung S."/>
            <person name="Newmann-Spallart C."/>
            <person name="Steiner J.M."/>
            <person name="Jakowitsch J."/>
            <person name="Bohnert H.J."/>
            <person name="Bryant D.A."/>
        </authorList>
    </citation>
    <scope>NUCLEOTIDE SEQUENCE [LARGE SCALE GENOMIC DNA]</scope>
    <source>
        <strain>UTEX LB 555 / Pringsheim</strain>
    </source>
</reference>
<keyword id="KW-0194">Cyanelle</keyword>
<keyword id="KW-0472">Membrane</keyword>
<keyword id="KW-0602">Photosynthesis</keyword>
<keyword id="KW-0604">Photosystem II</keyword>
<keyword id="KW-0934">Plastid</keyword>
<keyword id="KW-0674">Reaction center</keyword>
<keyword id="KW-0793">Thylakoid</keyword>
<keyword id="KW-0812">Transmembrane</keyword>
<keyword id="KW-1133">Transmembrane helix</keyword>
<comment type="function">
    <text evidence="1">One of the components of the core complex of photosystem II (PSII). PSII is a light-driven water:plastoquinone oxidoreductase that uses light energy to abstract electrons from H(2)O, generating O(2) and a proton gradient subsequently used for ATP formation. It consists of a core antenna complex that captures photons, and an electron transfer chain that converts photonic excitation into a charge separation.</text>
</comment>
<comment type="subunit">
    <text evidence="1">PSII is composed of 1 copy each of membrane proteins PsbA, PsbB, PsbC, PsbD, PsbE, PsbF, PsbH, PsbI, PsbJ, PsbK, PsbL, PsbM, PsbT, PsbX, PsbY, PsbZ, Psb30/Ycf12, at least 3 peripheral proteins of the oxygen-evolving complex and a large number of cofactors. It forms dimeric complexes.</text>
</comment>
<comment type="subcellular location">
    <subcellularLocation>
        <location evidence="1">Plastid</location>
        <location evidence="1">Cyanelle thylakoid membrane</location>
        <topology evidence="1">Single-pass membrane protein</topology>
    </subcellularLocation>
</comment>
<comment type="similarity">
    <text evidence="1">Belongs to the PsbJ family.</text>
</comment>
<gene>
    <name evidence="1" type="primary">psbJ</name>
</gene>
<sequence length="40" mass="3972">MANTGGRIPLWLVATVAGLAAIGVLGIFFYGGYSGLGSSI</sequence>
<dbReference type="EMBL" id="M35129">
    <property type="protein sequence ID" value="AAA31698.1"/>
    <property type="molecule type" value="Genomic_DNA"/>
</dbReference>
<dbReference type="EMBL" id="U30821">
    <property type="protein sequence ID" value="AAA81212.1"/>
    <property type="molecule type" value="Genomic_DNA"/>
</dbReference>
<dbReference type="PIR" id="T06869">
    <property type="entry name" value="T06869"/>
</dbReference>
<dbReference type="RefSeq" id="NP_043181.1">
    <property type="nucleotide sequence ID" value="NC_001675.1"/>
</dbReference>
<dbReference type="SMR" id="P19155"/>
<dbReference type="GeneID" id="801512"/>
<dbReference type="GO" id="GO:0033115">
    <property type="term" value="C:cyanelle thylakoid membrane"/>
    <property type="evidence" value="ECO:0007669"/>
    <property type="project" value="UniProtKB-SubCell"/>
</dbReference>
<dbReference type="GO" id="GO:0009539">
    <property type="term" value="C:photosystem II reaction center"/>
    <property type="evidence" value="ECO:0007669"/>
    <property type="project" value="InterPro"/>
</dbReference>
<dbReference type="GO" id="GO:0015979">
    <property type="term" value="P:photosynthesis"/>
    <property type="evidence" value="ECO:0007669"/>
    <property type="project" value="UniProtKB-UniRule"/>
</dbReference>
<dbReference type="Gene3D" id="6.10.250.2070">
    <property type="match status" value="1"/>
</dbReference>
<dbReference type="HAMAP" id="MF_01305">
    <property type="entry name" value="PSII_PsbJ"/>
    <property type="match status" value="1"/>
</dbReference>
<dbReference type="InterPro" id="IPR002682">
    <property type="entry name" value="PSII_PsbJ"/>
</dbReference>
<dbReference type="InterPro" id="IPR037267">
    <property type="entry name" value="PSII_PsbJ_sf"/>
</dbReference>
<dbReference type="NCBIfam" id="NF002722">
    <property type="entry name" value="PRK02565.1"/>
    <property type="match status" value="1"/>
</dbReference>
<dbReference type="PANTHER" id="PTHR34812">
    <property type="entry name" value="PHOTOSYSTEM II REACTION CENTER PROTEIN J"/>
    <property type="match status" value="1"/>
</dbReference>
<dbReference type="PANTHER" id="PTHR34812:SF3">
    <property type="entry name" value="PHOTOSYSTEM II REACTION CENTER PROTEIN J"/>
    <property type="match status" value="1"/>
</dbReference>
<dbReference type="Pfam" id="PF01788">
    <property type="entry name" value="PsbJ"/>
    <property type="match status" value="1"/>
</dbReference>
<dbReference type="SUPFAM" id="SSF161021">
    <property type="entry name" value="Photosystem II reaction center protein J, PsbJ"/>
    <property type="match status" value="1"/>
</dbReference>
<evidence type="ECO:0000255" key="1">
    <source>
        <dbReference type="HAMAP-Rule" id="MF_01305"/>
    </source>
</evidence>
<proteinExistence type="inferred from homology"/>
<protein>
    <recommendedName>
        <fullName evidence="1">Photosystem II reaction center protein J</fullName>
        <shortName evidence="1">PSII-J</shortName>
    </recommendedName>
</protein>
<name>PSBJ_CYAPA</name>